<accession>P09483</accession>
<accession>O35769</accession>
<name>ACHA4_RAT</name>
<keyword id="KW-0025">Alternative splicing</keyword>
<keyword id="KW-0106">Calcium</keyword>
<keyword id="KW-1003">Cell membrane</keyword>
<keyword id="KW-0966">Cell projection</keyword>
<keyword id="KW-0903">Direct protein sequencing</keyword>
<keyword id="KW-1015">Disulfide bond</keyword>
<keyword id="KW-0325">Glycoprotein</keyword>
<keyword id="KW-0407">Ion channel</keyword>
<keyword id="KW-0406">Ion transport</keyword>
<keyword id="KW-1071">Ligand-gated ion channel</keyword>
<keyword id="KW-0449">Lipoprotein</keyword>
<keyword id="KW-0472">Membrane</keyword>
<keyword id="KW-0479">Metal-binding</keyword>
<keyword id="KW-0564">Palmitate</keyword>
<keyword id="KW-0597">Phosphoprotein</keyword>
<keyword id="KW-0675">Receptor</keyword>
<keyword id="KW-1185">Reference proteome</keyword>
<keyword id="KW-0732">Signal</keyword>
<keyword id="KW-0770">Synapse</keyword>
<keyword id="KW-0812">Transmembrane</keyword>
<keyword id="KW-1133">Transmembrane helix</keyword>
<keyword id="KW-0813">Transport</keyword>
<evidence type="ECO:0000250" key="1">
    <source>
        <dbReference type="UniProtKB" id="O70174"/>
    </source>
</evidence>
<evidence type="ECO:0000250" key="2">
    <source>
        <dbReference type="UniProtKB" id="P02709"/>
    </source>
</evidence>
<evidence type="ECO:0000250" key="3">
    <source>
        <dbReference type="UniProtKB" id="P43681"/>
    </source>
</evidence>
<evidence type="ECO:0000255" key="4"/>
<evidence type="ECO:0000256" key="5">
    <source>
        <dbReference type="SAM" id="MobiDB-lite"/>
    </source>
</evidence>
<evidence type="ECO:0000269" key="6">
    <source>
    </source>
</evidence>
<evidence type="ECO:0000269" key="7">
    <source>
    </source>
</evidence>
<evidence type="ECO:0000269" key="8">
    <source>
    </source>
</evidence>
<evidence type="ECO:0000269" key="9">
    <source>
    </source>
</evidence>
<evidence type="ECO:0000303" key="10">
    <source>
    </source>
</evidence>
<evidence type="ECO:0000303" key="11">
    <source ref="3"/>
</evidence>
<evidence type="ECO:0000305" key="12"/>
<evidence type="ECO:0000305" key="13">
    <source>
    </source>
</evidence>
<evidence type="ECO:0007744" key="14">
    <source>
    </source>
</evidence>
<proteinExistence type="evidence at protein level"/>
<reference key="1">
    <citation type="journal article" date="1987" name="Cell">
        <title>Members of a nicotinic acetylcholine receptor gene family are expressed in different regions of the mammalian central nervous system.</title>
        <authorList>
            <person name="Goldman D.J."/>
            <person name="Deneris E.S."/>
            <person name="Luyten W."/>
            <person name="Kochhar A."/>
            <person name="Patrick J."/>
            <person name="Heinemann S.F."/>
        </authorList>
    </citation>
    <scope>NUCLEOTIDE SEQUENCE [MRNA] (ISOFORM ALPHA-4-1)</scope>
    <scope>NUCLEOTIDE SEQUENCE [MRNA] OF 5-630 (ISOFORM ALPHA-4-2)</scope>
    <source>
        <strain>Sprague-Dawley</strain>
        <tissue>Hippocampus</tissue>
        <tissue>Hypothalamus</tissue>
    </source>
</reference>
<reference key="2">
    <citation type="submission" date="1998-12" db="EMBL/GenBank/DDBJ databases">
        <authorList>
            <person name="Hartley M."/>
            <person name="Goldman D.J."/>
            <person name="Heinemann S.F."/>
        </authorList>
    </citation>
    <scope>SEQUENCE REVISION</scope>
</reference>
<reference key="3">
    <citation type="submission" date="1997-06" db="EMBL/GenBank/DDBJ databases">
        <authorList>
            <person name="Boulter J."/>
            <person name="Deneris E.S."/>
            <person name="Evans K."/>
            <person name="Heinemann S.F."/>
        </authorList>
    </citation>
    <scope>NUCLEOTIDE SEQUENCE [MRNA] (ISOFORM ALPHA-4-2)</scope>
</reference>
<reference key="4">
    <citation type="journal article" date="1987" name="FEBS Lett.">
        <title>Neuronal nicotinic acetylcholine receptor beta-subunit is coded for by the cDNA clone alpha 4.</title>
        <authorList>
            <person name="Whiting P."/>
            <person name="Esch F."/>
            <person name="Shimasaki S."/>
            <person name="Lindstrom J."/>
        </authorList>
    </citation>
    <scope>PROTEIN SEQUENCE OF 31-47</scope>
</reference>
<reference key="5">
    <citation type="journal article" date="1999" name="Mol. Pharmacol.">
        <title>Ligand binding and activation of rat nicotinic alpha4beta2 receptors stably expressed in HEK293 cells.</title>
        <authorList>
            <person name="Sabey K."/>
            <person name="Paradiso K."/>
            <person name="Zhang J."/>
            <person name="Steinbach J.H."/>
        </authorList>
    </citation>
    <scope>FUNCTION</scope>
    <scope>CATALYTIC ACTIVITY</scope>
    <scope>SUBUNIT</scope>
    <scope>ACTIVITY REGULATION</scope>
</reference>
<reference key="6">
    <citation type="journal article" date="2005" name="J. Biol. Chem.">
        <title>Beta2 subunit contribution to 4/7 alpha-conotoxin binding to the nicotinic acetylcholine receptor.</title>
        <authorList>
            <person name="Dutertre S."/>
            <person name="Nicke A."/>
            <person name="Lewis R.J."/>
        </authorList>
    </citation>
    <scope>ACTIVITY REGULATION</scope>
</reference>
<reference key="7">
    <citation type="journal article" date="2012" name="J. Biol. Chem.">
        <title>A highly conserved cytoplasmic cysteine residue in the alpha4 nicotinic acetylcholine receptor is palmitoylated and regulates protein expression.</title>
        <authorList>
            <person name="Amici S.A."/>
            <person name="McKay S.B."/>
            <person name="Wells G.B."/>
            <person name="Robson J.I."/>
            <person name="Nasir M."/>
            <person name="Ponath G."/>
            <person name="Anand R."/>
        </authorList>
    </citation>
    <scope>PALMITOYLATION AT CYS-273</scope>
    <scope>SUBCELLULAR LOCATION</scope>
    <scope>FUNCTION</scope>
    <scope>CATALYTIC ACTIVITY</scope>
    <scope>ACTIVITY REGULATION</scope>
    <scope>MUTAGENESIS OF CYS-273</scope>
</reference>
<reference key="8">
    <citation type="journal article" date="2012" name="FASEB J.">
        <title>alpha6 nAChR subunit residues that confer alpha-conotoxin BuIA selectivity.</title>
        <authorList>
            <person name="Kim H.W."/>
            <person name="McIntosh J.M."/>
        </authorList>
    </citation>
    <scope>MUTAGENESIS OF 219-THR--ARG-242; 220-TYR--ARG-223 AND ARG-223</scope>
    <scope>ACTIVITY REGULATION</scope>
    <scope>SUBUNIT</scope>
</reference>
<reference key="9">
    <citation type="journal article" date="2012" name="Nat. Commun.">
        <title>Quantitative maps of protein phosphorylation sites across 14 different rat organs and tissues.</title>
        <authorList>
            <person name="Lundby A."/>
            <person name="Secher A."/>
            <person name="Lage K."/>
            <person name="Nordsborg N.B."/>
            <person name="Dmytriyev A."/>
            <person name="Lundby C."/>
            <person name="Olsen J.V."/>
        </authorList>
    </citation>
    <scope>PHOSPHORYLATION [LARGE SCALE ANALYSIS] AT SER-428</scope>
    <scope>IDENTIFICATION BY MASS SPECTROMETRY [LARGE SCALE ANALYSIS]</scope>
</reference>
<gene>
    <name type="primary">Chrna4</name>
    <name type="synonym">Acra4</name>
</gene>
<comment type="function">
    <text evidence="1 3 13">Component of neuronal acetylcholine receptors (nAChRs) that function as pentameric, ligand-gated cation channels with high calcium permeability among other activities. nAChRs are excitatory neurotrasnmitter receptors formed by a collection of nAChR subunits known to mediate synaptic transmission in the nervous system and the neuromuscular junction. Each nAchR subunit confers differential attributes to channel properties, including activation, deactivation and desensitization kinetics, pH sensitivity, cation permeability, and binding to allosteric modulators (Probable). CHRNA4 forms heteropentameric neuronal acetylcholine receptors with CHRNB2 and CHRNB4, as well as CHRNA5 and CHRNB3 as accesory subunits. Is the most abundant nAChR subtype expressed in the central nervous system (By similarity). Found in two major stoichiometric forms,(CHRNA4)3:(CHRNB2)2 and (CHRNA4)2:(CHRNB2)3, the two stoichiometric forms differ in their unitary conductance, calcium permeability, ACh sensitivity and potentiation by divalent cation (By similarity). Involved in the modulation of calcium-dependent signaling pathways, influences the release of neurotransmitters, including dopamine, glutamate and GABA (By similarity).</text>
</comment>
<comment type="catalytic activity">
    <reaction evidence="7 9">
        <text>Ca(2+)(in) = Ca(2+)(out)</text>
        <dbReference type="Rhea" id="RHEA:29671"/>
        <dbReference type="ChEBI" id="CHEBI:29108"/>
    </reaction>
</comment>
<comment type="catalytic activity">
    <reaction evidence="2">
        <text>K(+)(in) = K(+)(out)</text>
        <dbReference type="Rhea" id="RHEA:29463"/>
        <dbReference type="ChEBI" id="CHEBI:29103"/>
    </reaction>
</comment>
<comment type="catalytic activity">
    <reaction evidence="3">
        <text>Na(+)(in) = Na(+)(out)</text>
        <dbReference type="Rhea" id="RHEA:34963"/>
        <dbReference type="ChEBI" id="CHEBI:29101"/>
    </reaction>
</comment>
<comment type="activity regulation">
    <text evidence="3 6 7 8 9">Activated by a myriad of ligands such as acetylcholine, cytisine, nicotine, choline and epibatidine (PubMed:22593584, PubMed:9882698). Channel potentiation by calcium is stoichiometry-selective, CHRNA4:CHRNB2 nACh receptor is achieved by calcium association with topographically distinct sites framed by anionic residues within the CHRNA4 subunit and between the CHRNA4 and CHRNB2 subunits (By similarity). nAChR activity is inhibited by the antagonist alpha-conotoxins BuIA, PnIA, GID and MII, small disulfide-constrained peptides from cone snails (PubMed:15929983, PubMed:22751014).</text>
</comment>
<comment type="subunit">
    <text evidence="1 3 8 9">Neuronal AChR is composed of two different types of subunits: alpha and beta. CHRNA4 forms heteropentameric neuronal acetylcholine receptors with CHRNB2 and CHRNB4, as well as CHRNA5 and CHRNB3 as accesory subunits (PubMed:22751014, PubMed:9882698). Found in two major stoichiometric forms, LS (low agonist sensitivity): (CHRNA4)3:(CHRNB2)2 and HS (high agonist sensitivity): (CHRNA4)2:(CHRNB2)3, the two stoichiometric forms differ in their unitary conductance, calcium permeability, ACh sensitivity and potentiation by divalent cation. Cells produce predominantly an (CHRNA4)3:(CHRNB2)2 nAChR. The (CHRNA4)2:(CHRNB2)3 expression is selectively up-regulated by nicotine and has lower single channel conductance and calcium permeability (By similarity). In the striatum, also forms CHRNA4:CHRNA6:CHRNB2 complexes (PubMed:22751014). Also found in the stoichiometric form: (CHRNA4:CHRNB2)2:CHRNB3 (By similarity). Interacts with RIC3; which is required for proper folding and assembly. Interacts with LYPD6 (By similarity).</text>
</comment>
<comment type="interaction">
    <interactant intactId="EBI-7842410">
        <id>P09483</id>
    </interactant>
    <interactant intactId="EBI-10828372">
        <id>P20420</id>
        <label>Chrna5</label>
    </interactant>
    <organismsDiffer>false</organismsDiffer>
    <experiments>6</experiments>
</comment>
<comment type="interaction">
    <interactant intactId="EBI-7842410">
        <id>P09483</id>
    </interactant>
    <interactant intactId="EBI-9008812">
        <id>P12390</id>
        <label>Chrnb2</label>
    </interactant>
    <organismsDiffer>false</organismsDiffer>
    <experiments>6</experiments>
</comment>
<comment type="interaction">
    <interactant intactId="EBI-7842410">
        <id>P09483</id>
    </interactant>
    <interactant intactId="EBI-9008856">
        <id>P12392</id>
        <label>Chrnb4</label>
    </interactant>
    <organismsDiffer>false</organismsDiffer>
    <experiments>4</experiments>
</comment>
<comment type="subcellular location">
    <subcellularLocation>
        <location evidence="7">Presynaptic cell membrane</location>
        <topology evidence="7">Multi-pass membrane protein</topology>
    </subcellularLocation>
    <subcellularLocation>
        <location evidence="1">Cell membrane</location>
        <topology evidence="4">Multi-pass membrane protein</topology>
    </subcellularLocation>
</comment>
<comment type="alternative products">
    <event type="alternative splicing"/>
    <isoform>
        <id>P09483-1</id>
        <name>Alpha-4-1</name>
        <sequence type="displayed"/>
    </isoform>
    <isoform>
        <id>P09483-2</id>
        <name>Alpha-4-2</name>
        <sequence type="described" ref="VSP_000074"/>
    </isoform>
</comment>
<comment type="tissue specificity">
    <text evidence="7">In various regions of the central nervous system. Expressed in hippocampal neurons (PubMed:22593584).</text>
</comment>
<comment type="miscellaneous">
    <text evidence="8">The nAChR composed of CHRNA4/alpha-4 and CHRNB2/beta-2 subunits does not bind the conotoxin BuIA.</text>
</comment>
<comment type="similarity">
    <text evidence="12">Belongs to the ligand-gated ion channel (TC 1.A.9) family. Acetylcholine receptor (TC 1.A.9.1) subfamily. Alpha-4/CHRNA4 sub-subfamily.</text>
</comment>
<organism>
    <name type="scientific">Rattus norvegicus</name>
    <name type="common">Rat</name>
    <dbReference type="NCBI Taxonomy" id="10116"/>
    <lineage>
        <taxon>Eukaryota</taxon>
        <taxon>Metazoa</taxon>
        <taxon>Chordata</taxon>
        <taxon>Craniata</taxon>
        <taxon>Vertebrata</taxon>
        <taxon>Euteleostomi</taxon>
        <taxon>Mammalia</taxon>
        <taxon>Eutheria</taxon>
        <taxon>Euarchontoglires</taxon>
        <taxon>Glires</taxon>
        <taxon>Rodentia</taxon>
        <taxon>Myomorpha</taxon>
        <taxon>Muroidea</taxon>
        <taxon>Muridae</taxon>
        <taxon>Murinae</taxon>
        <taxon>Rattus</taxon>
    </lineage>
</organism>
<feature type="signal peptide" evidence="4">
    <location>
        <begin position="1"/>
        <end position="30"/>
    </location>
</feature>
<feature type="chain" id="PRO_0000000354" description="Neuronal acetylcholine receptor subunit alpha-4">
    <location>
        <begin position="31"/>
        <end position="630"/>
    </location>
</feature>
<feature type="topological domain" description="Extracellular" evidence="4">
    <location>
        <begin position="32"/>
        <end position="249"/>
    </location>
</feature>
<feature type="transmembrane region" description="Helical" evidence="4">
    <location>
        <begin position="250"/>
        <end position="270"/>
    </location>
</feature>
<feature type="transmembrane region" description="Helical" evidence="4">
    <location>
        <begin position="279"/>
        <end position="299"/>
    </location>
</feature>
<feature type="transmembrane region" description="Helical" evidence="4">
    <location>
        <begin position="313"/>
        <end position="333"/>
    </location>
</feature>
<feature type="topological domain" description="Cytoplasmic" evidence="4">
    <location>
        <begin position="334"/>
        <end position="604"/>
    </location>
</feature>
<feature type="transmembrane region" description="Helical" evidence="4">
    <location>
        <begin position="605"/>
        <end position="625"/>
    </location>
</feature>
<feature type="region of interest" description="Disordered" evidence="5">
    <location>
        <begin position="418"/>
        <end position="463"/>
    </location>
</feature>
<feature type="region of interest" description="Disordered" evidence="5">
    <location>
        <begin position="505"/>
        <end position="526"/>
    </location>
</feature>
<feature type="compositionally biased region" description="Basic and acidic residues" evidence="5">
    <location>
        <begin position="434"/>
        <end position="443"/>
    </location>
</feature>
<feature type="compositionally biased region" description="Pro residues" evidence="5">
    <location>
        <begin position="447"/>
        <end position="457"/>
    </location>
</feature>
<feature type="binding site" evidence="3">
    <location>
        <position position="78"/>
    </location>
    <ligand>
        <name>Ca(2+)</name>
        <dbReference type="ChEBI" id="CHEBI:29108"/>
    </ligand>
</feature>
<feature type="binding site" evidence="3">
    <location>
        <position position="80"/>
    </location>
    <ligand>
        <name>Ca(2+)</name>
        <dbReference type="ChEBI" id="CHEBI:29108"/>
    </ligand>
</feature>
<feature type="modified residue" description="Phosphoserine" evidence="14">
    <location>
        <position position="428"/>
    </location>
</feature>
<feature type="modified residue" description="Phosphoserine" evidence="1">
    <location>
        <position position="542"/>
    </location>
</feature>
<feature type="modified residue" description="Phosphoserine" evidence="1">
    <location>
        <position position="545"/>
    </location>
</feature>
<feature type="lipid moiety-binding region" description="S-palmitoyl cysteine" evidence="7">
    <location>
        <position position="273"/>
    </location>
</feature>
<feature type="glycosylation site" description="N-linked (GlcNAc...) asparagine" evidence="4">
    <location>
        <position position="59"/>
    </location>
</feature>
<feature type="glycosylation site" description="N-linked (GlcNAc...) asparagine" evidence="4">
    <location>
        <position position="109"/>
    </location>
</feature>
<feature type="glycosylation site" description="N-linked (GlcNAc...) asparagine" evidence="4">
    <location>
        <position position="176"/>
    </location>
</feature>
<feature type="disulfide bond" evidence="3">
    <location>
        <begin position="163"/>
        <end position="177"/>
    </location>
</feature>
<feature type="disulfide bond" description="Associated with receptor activation" evidence="3">
    <location>
        <begin position="227"/>
        <end position="228"/>
    </location>
</feature>
<feature type="splice variant" id="VSP_000074" description="In isoform Alpha-4-2." evidence="10 11">
    <original>AC</original>
    <variation>GMI</variation>
    <location>
        <begin position="629"/>
        <end position="630"/>
    </location>
</feature>
<feature type="mutagenesis site" description="&gt;10000-fold increase in inhibition of CHRNA4:CHRNB2 nAChR by the conotoxin BuIA." evidence="8">
    <original>TYNTRKYECCAEIYPDITYAFI</original>
    <variation>YKHDIKYNCCEEIYTDITYSFY</variation>
    <location>
        <begin position="219"/>
        <end position="240"/>
    </location>
</feature>
<feature type="mutagenesis site" description="&gt;1700-fold increase in inhibition of CHRNA4:CHRNB2 nAChR by the conotoxin BuIA." evidence="8">
    <original>YNTR</original>
    <variation>KHDI</variation>
    <location>
        <begin position="220"/>
        <end position="223"/>
    </location>
</feature>
<feature type="mutagenesis site" description="&gt;10-fold increase in inhibition of CHRNA4:CHRNB2 nAChR by the conotoxin BuIA." evidence="8">
    <original>R</original>
    <variation>I</variation>
    <location>
        <position position="223"/>
    </location>
</feature>
<feature type="mutagenesis site" description="Loss of palmitoylation. Decreases surface expression but presynaptic terminals targeting. No effect on ligand binding." evidence="7">
    <original>C</original>
    <variation>S</variation>
    <location>
        <position position="273"/>
    </location>
</feature>
<feature type="sequence conflict" description="In Ref. 1; AAA41676." evidence="12" ref="1">
    <original>MANS</original>
    <variation>MEIGGPGA</variation>
    <location>
        <begin position="1"/>
        <end position="4"/>
    </location>
</feature>
<feature type="sequence conflict" description="In Ref. 3; AAB64439." evidence="12" ref="3">
    <original>T</original>
    <variation>P</variation>
    <location>
        <position position="6"/>
    </location>
</feature>
<feature type="sequence conflict" description="In Ref. 1; AAA41676 and 3; AAB64439." evidence="12" ref="1 3">
    <original>A</original>
    <variation>G</variation>
    <location>
        <position position="58"/>
    </location>
</feature>
<feature type="sequence conflict" description="In Ref. 1; AAA41676 and 3; AAB64439." evidence="12" ref="1 3">
    <original>M</original>
    <variation>I</variation>
    <location>
        <position position="196"/>
    </location>
</feature>
<feature type="sequence conflict" description="In Ref. 1; AAA41676/AAC97071 and 3; AAB64439." evidence="12" ref="1 3">
    <location>
        <position position="301"/>
    </location>
</feature>
<protein>
    <recommendedName>
        <fullName>Neuronal acetylcholine receptor subunit alpha-4</fullName>
    </recommendedName>
</protein>
<sequence length="630" mass="70193">MANSGTGAPPPLLLLPLLLLLGTGLLPASSHIETRAHAEERLLKRLFSGYNKWSRPVANISDVVLVRFGLSIAQLIDVDEKNQMMTTNVWVKQEWHDYKLRWDPGDYENVTSIRIPSELIWRPDIVLYNNADGDFAVTHLTKAHLFYDGRVQWTPPAIYKSSCSIDVTFFPFDQQNCTMKFGSWTYDKAKIDLVSMHSRVDQLDFWESGEWVIVDAVGTYNTRKYECCAEIYPDITYAFIIRRLPLFYTINLIIPCLLISCLTVLVFYLPSECGEKVTLCISVLLSLTVFLLLITEIIPSPTSLVIPLIGEYLLFTMIFVTLSIVITVFVLNVHHRSPRTHTMPAWVRRVFLDIVPRLLFMKRPSVVKDNCRRLIESMHKMANAPRFWPEPVGEPGILSDICNQGLSPAPTFCNPTDTAVETQPTCRSPPLEVPDLKTSEVEKASPCPSPGSCPPPKSSSGAPMLIKARSLSVQHVPSSQEAAEDGIRCRSRSIQYCVSQDGAASLADSKPTSSPTSLKARPSQLPVSDQASPCKCTCKEPSPVSPVTVLKAGGTKAPPQHLPLSPALTRAVEGVQYIADHLKAEDTDFSVKEDWKYVAMVIDRIFLWMFIIVCLLGTVGLFLPPWLAAC</sequence>
<dbReference type="EMBL" id="M15682">
    <property type="protein sequence ID" value="AAA41676.1"/>
    <property type="molecule type" value="mRNA"/>
</dbReference>
<dbReference type="EMBL" id="L31620">
    <property type="protein sequence ID" value="AAC97071.1"/>
    <property type="molecule type" value="mRNA"/>
</dbReference>
<dbReference type="EMBL" id="AF007212">
    <property type="protein sequence ID" value="AAB64439.1"/>
    <property type="molecule type" value="mRNA"/>
</dbReference>
<dbReference type="RefSeq" id="NP_077330.1">
    <property type="nucleotide sequence ID" value="NM_024354.1"/>
</dbReference>
<dbReference type="SMR" id="P09483"/>
<dbReference type="ComplexPortal" id="CPX-170">
    <property type="entry name" value="Neuronal nicotinic acetylcholine receptor complex, 2xalpha4-3xbeta2"/>
</dbReference>
<dbReference type="ComplexPortal" id="CPX-171">
    <property type="entry name" value="Neuronal nicotinic acetylcholine receptor complex, 3xalpha4-2xbeta2"/>
</dbReference>
<dbReference type="ComplexPortal" id="CPX-215">
    <property type="entry name" value="Neuronal nicotinic acetylcholine receptor complex, alpha4-alpha5-beta2"/>
</dbReference>
<dbReference type="ComplexPortal" id="CPX-219">
    <property type="entry name" value="Neuronal nicotinic acetylcholine receptor complex, alpha4-beta4"/>
</dbReference>
<dbReference type="CORUM" id="P09483"/>
<dbReference type="FunCoup" id="P09483">
    <property type="interactions" value="352"/>
</dbReference>
<dbReference type="IntAct" id="P09483">
    <property type="interactions" value="6"/>
</dbReference>
<dbReference type="MINT" id="P09483"/>
<dbReference type="STRING" id="10116.ENSRNOP00000073967"/>
<dbReference type="BindingDB" id="P09483"/>
<dbReference type="ChEMBL" id="CHEMBL307"/>
<dbReference type="DrugCentral" id="P09483"/>
<dbReference type="GuidetoPHARMACOLOGY" id="465"/>
<dbReference type="GlyCosmos" id="P09483">
    <property type="glycosylation" value="3 sites, No reported glycans"/>
</dbReference>
<dbReference type="GlyGen" id="P09483">
    <property type="glycosylation" value="3 sites"/>
</dbReference>
<dbReference type="iPTMnet" id="P09483"/>
<dbReference type="PhosphoSitePlus" id="P09483"/>
<dbReference type="SwissPalm" id="P09483"/>
<dbReference type="PaxDb" id="10116-ENSRNOP00000009041"/>
<dbReference type="GeneID" id="25590"/>
<dbReference type="KEGG" id="rno:25590"/>
<dbReference type="UCSC" id="RGD:2346">
    <molecule id="P09483-1"/>
    <property type="organism name" value="rat"/>
</dbReference>
<dbReference type="AGR" id="RGD:2346"/>
<dbReference type="CTD" id="1137"/>
<dbReference type="RGD" id="2346">
    <property type="gene designation" value="Chrna4"/>
</dbReference>
<dbReference type="eggNOG" id="KOG3645">
    <property type="taxonomic scope" value="Eukaryota"/>
</dbReference>
<dbReference type="InParanoid" id="P09483"/>
<dbReference type="PhylomeDB" id="P09483"/>
<dbReference type="Reactome" id="R-RNO-629587">
    <property type="pathway name" value="Highly sodium permeable postsynaptic acetylcholine nicotinic receptors"/>
</dbReference>
<dbReference type="Reactome" id="R-RNO-629594">
    <property type="pathway name" value="Highly calcium permeable postsynaptic nicotinic acetylcholine receptors"/>
</dbReference>
<dbReference type="Reactome" id="R-RNO-629597">
    <property type="pathway name" value="Highly calcium permeable nicotinic acetylcholine receptors"/>
</dbReference>
<dbReference type="PRO" id="PR:P09483"/>
<dbReference type="Proteomes" id="UP000002494">
    <property type="component" value="Unplaced"/>
</dbReference>
<dbReference type="GO" id="GO:0005892">
    <property type="term" value="C:acetylcholine-gated channel complex"/>
    <property type="evidence" value="ECO:0000314"/>
    <property type="project" value="UniProtKB"/>
</dbReference>
<dbReference type="GO" id="GO:0034703">
    <property type="term" value="C:cation channel complex"/>
    <property type="evidence" value="ECO:0000266"/>
    <property type="project" value="RGD"/>
</dbReference>
<dbReference type="GO" id="GO:0098981">
    <property type="term" value="C:cholinergic synapse"/>
    <property type="evidence" value="ECO:0000314"/>
    <property type="project" value="SynGO"/>
</dbReference>
<dbReference type="GO" id="GO:0030425">
    <property type="term" value="C:dendrite"/>
    <property type="evidence" value="ECO:0000314"/>
    <property type="project" value="RGD"/>
</dbReference>
<dbReference type="GO" id="GO:0098691">
    <property type="term" value="C:dopaminergic synapse"/>
    <property type="evidence" value="ECO:0000266"/>
    <property type="project" value="RGD"/>
</dbReference>
<dbReference type="GO" id="GO:0009897">
    <property type="term" value="C:external side of plasma membrane"/>
    <property type="evidence" value="ECO:0000266"/>
    <property type="project" value="RGD"/>
</dbReference>
<dbReference type="GO" id="GO:0016020">
    <property type="term" value="C:membrane"/>
    <property type="evidence" value="ECO:0000266"/>
    <property type="project" value="RGD"/>
</dbReference>
<dbReference type="GO" id="GO:0043005">
    <property type="term" value="C:neuron projection"/>
    <property type="evidence" value="ECO:0000318"/>
    <property type="project" value="GO_Central"/>
</dbReference>
<dbReference type="GO" id="GO:0043025">
    <property type="term" value="C:neuronal cell body"/>
    <property type="evidence" value="ECO:0000314"/>
    <property type="project" value="RGD"/>
</dbReference>
<dbReference type="GO" id="GO:0098878">
    <property type="term" value="C:neurotransmitter receptor complex"/>
    <property type="evidence" value="ECO:0000266"/>
    <property type="project" value="RGD"/>
</dbReference>
<dbReference type="GO" id="GO:0005886">
    <property type="term" value="C:plasma membrane"/>
    <property type="evidence" value="ECO:0000266"/>
    <property type="project" value="RGD"/>
</dbReference>
<dbReference type="GO" id="GO:0099634">
    <property type="term" value="C:postsynaptic specialization membrane"/>
    <property type="evidence" value="ECO:0000314"/>
    <property type="project" value="SynGO"/>
</dbReference>
<dbReference type="GO" id="GO:0042734">
    <property type="term" value="C:presynaptic membrane"/>
    <property type="evidence" value="ECO:0000314"/>
    <property type="project" value="UniProtKB"/>
</dbReference>
<dbReference type="GO" id="GO:0032991">
    <property type="term" value="C:protein-containing complex"/>
    <property type="evidence" value="ECO:0000314"/>
    <property type="project" value="RGD"/>
</dbReference>
<dbReference type="GO" id="GO:0045202">
    <property type="term" value="C:synapse"/>
    <property type="evidence" value="ECO:0000318"/>
    <property type="project" value="GO_Central"/>
</dbReference>
<dbReference type="GO" id="GO:0042166">
    <property type="term" value="F:acetylcholine binding"/>
    <property type="evidence" value="ECO:0000314"/>
    <property type="project" value="RGD"/>
</dbReference>
<dbReference type="GO" id="GO:0015464">
    <property type="term" value="F:acetylcholine receptor activity"/>
    <property type="evidence" value="ECO:0000266"/>
    <property type="project" value="RGD"/>
</dbReference>
<dbReference type="GO" id="GO:0022848">
    <property type="term" value="F:acetylcholine-gated monoatomic cation-selective channel activity"/>
    <property type="evidence" value="ECO:0000314"/>
    <property type="project" value="UniProtKB"/>
</dbReference>
<dbReference type="GO" id="GO:1901363">
    <property type="term" value="F:heterocyclic compound binding"/>
    <property type="evidence" value="ECO:0000314"/>
    <property type="project" value="RGD"/>
</dbReference>
<dbReference type="GO" id="GO:0005216">
    <property type="term" value="F:monoatomic ion channel activity"/>
    <property type="evidence" value="ECO:0000266"/>
    <property type="project" value="RGD"/>
</dbReference>
<dbReference type="GO" id="GO:0044877">
    <property type="term" value="F:protein-containing complex binding"/>
    <property type="evidence" value="ECO:0000314"/>
    <property type="project" value="RGD"/>
</dbReference>
<dbReference type="GO" id="GO:0050997">
    <property type="term" value="F:quaternary ammonium group binding"/>
    <property type="evidence" value="ECO:0000314"/>
    <property type="project" value="RGD"/>
</dbReference>
<dbReference type="GO" id="GO:1904315">
    <property type="term" value="F:transmitter-gated monoatomic ion channel activity involved in regulation of postsynaptic membrane potential"/>
    <property type="evidence" value="ECO:0000314"/>
    <property type="project" value="SynGO"/>
</dbReference>
<dbReference type="GO" id="GO:0095500">
    <property type="term" value="P:acetylcholine receptor signaling pathway"/>
    <property type="evidence" value="ECO:0000314"/>
    <property type="project" value="UniProtKB"/>
</dbReference>
<dbReference type="GO" id="GO:0042113">
    <property type="term" value="P:B cell activation"/>
    <property type="evidence" value="ECO:0000266"/>
    <property type="project" value="RGD"/>
</dbReference>
<dbReference type="GO" id="GO:0035095">
    <property type="term" value="P:behavioral response to nicotine"/>
    <property type="evidence" value="ECO:0000266"/>
    <property type="project" value="RGD"/>
</dbReference>
<dbReference type="GO" id="GO:0006816">
    <property type="term" value="P:calcium ion transport"/>
    <property type="evidence" value="ECO:0000266"/>
    <property type="project" value="RGD"/>
</dbReference>
<dbReference type="GO" id="GO:0050890">
    <property type="term" value="P:cognition"/>
    <property type="evidence" value="ECO:0000266"/>
    <property type="project" value="RGD"/>
</dbReference>
<dbReference type="GO" id="GO:0006281">
    <property type="term" value="P:DNA repair"/>
    <property type="evidence" value="ECO:0000266"/>
    <property type="project" value="RGD"/>
</dbReference>
<dbReference type="GO" id="GO:0035640">
    <property type="term" value="P:exploration behavior"/>
    <property type="evidence" value="ECO:0000266"/>
    <property type="project" value="RGD"/>
</dbReference>
<dbReference type="GO" id="GO:0060080">
    <property type="term" value="P:inhibitory postsynaptic potential"/>
    <property type="evidence" value="ECO:0000266"/>
    <property type="project" value="RGD"/>
</dbReference>
<dbReference type="GO" id="GO:0007626">
    <property type="term" value="P:locomotory behavior"/>
    <property type="evidence" value="ECO:0000266"/>
    <property type="project" value="RGD"/>
</dbReference>
<dbReference type="GO" id="GO:0051899">
    <property type="term" value="P:membrane depolarization"/>
    <property type="evidence" value="ECO:0000266"/>
    <property type="project" value="RGD"/>
</dbReference>
<dbReference type="GO" id="GO:0034220">
    <property type="term" value="P:monoatomic ion transmembrane transport"/>
    <property type="evidence" value="ECO:0000318"/>
    <property type="project" value="GO_Central"/>
</dbReference>
<dbReference type="GO" id="GO:0050877">
    <property type="term" value="P:nervous system process"/>
    <property type="evidence" value="ECO:0000266"/>
    <property type="project" value="RGD"/>
</dbReference>
<dbReference type="GO" id="GO:0007274">
    <property type="term" value="P:neuromuscular synaptic transmission"/>
    <property type="evidence" value="ECO:0000318"/>
    <property type="project" value="GO_Central"/>
</dbReference>
<dbReference type="GO" id="GO:0019228">
    <property type="term" value="P:neuronal action potential"/>
    <property type="evidence" value="ECO:0000266"/>
    <property type="project" value="RGD"/>
</dbReference>
<dbReference type="GO" id="GO:0099171">
    <property type="term" value="P:presynaptic modulation of chemical synaptic transmission"/>
    <property type="evidence" value="ECO:0000266"/>
    <property type="project" value="RGD"/>
</dbReference>
<dbReference type="GO" id="GO:0014059">
    <property type="term" value="P:regulation of dopamine secretion"/>
    <property type="evidence" value="ECO:0000266"/>
    <property type="project" value="RGD"/>
</dbReference>
<dbReference type="GO" id="GO:0042391">
    <property type="term" value="P:regulation of membrane potential"/>
    <property type="evidence" value="ECO:0000266"/>
    <property type="project" value="RGD"/>
</dbReference>
<dbReference type="GO" id="GO:0007585">
    <property type="term" value="P:respiratory gaseous exchange by respiratory system"/>
    <property type="evidence" value="ECO:0000266"/>
    <property type="project" value="RGD"/>
</dbReference>
<dbReference type="GO" id="GO:1905144">
    <property type="term" value="P:response to acetylcholine"/>
    <property type="evidence" value="ECO:0000314"/>
    <property type="project" value="RGD"/>
</dbReference>
<dbReference type="GO" id="GO:0001666">
    <property type="term" value="P:response to hypoxia"/>
    <property type="evidence" value="ECO:0000266"/>
    <property type="project" value="RGD"/>
</dbReference>
<dbReference type="GO" id="GO:0035094">
    <property type="term" value="P:response to nicotine"/>
    <property type="evidence" value="ECO:0000266"/>
    <property type="project" value="RGD"/>
</dbReference>
<dbReference type="GO" id="GO:0006979">
    <property type="term" value="P:response to oxidative stress"/>
    <property type="evidence" value="ECO:0000266"/>
    <property type="project" value="RGD"/>
</dbReference>
<dbReference type="GO" id="GO:0019233">
    <property type="term" value="P:sensory perception of pain"/>
    <property type="evidence" value="ECO:0000266"/>
    <property type="project" value="RGD"/>
</dbReference>
<dbReference type="GO" id="GO:0007165">
    <property type="term" value="P:signal transduction"/>
    <property type="evidence" value="ECO:0000266"/>
    <property type="project" value="RGD"/>
</dbReference>
<dbReference type="GO" id="GO:0007271">
    <property type="term" value="P:synaptic transmission, cholinergic"/>
    <property type="evidence" value="ECO:0000314"/>
    <property type="project" value="UniProtKB"/>
</dbReference>
<dbReference type="CDD" id="cd19064">
    <property type="entry name" value="LGIC_TM_nAChR"/>
    <property type="match status" value="1"/>
</dbReference>
<dbReference type="FunFam" id="1.20.58.390:FF:000014">
    <property type="entry name" value="Neuronal nicotinic acetylcholine receptor alpha4 subunit"/>
    <property type="match status" value="1"/>
</dbReference>
<dbReference type="FunFam" id="2.70.170.10:FF:000005">
    <property type="entry name" value="Neuronal nicotinic acetylcholine receptor alpha4 subunit"/>
    <property type="match status" value="1"/>
</dbReference>
<dbReference type="FunFam" id="1.20.58.390:FF:000001">
    <property type="entry name" value="Neuronal nicotinic acetylcholine receptor subunit 3"/>
    <property type="match status" value="1"/>
</dbReference>
<dbReference type="Gene3D" id="2.70.170.10">
    <property type="entry name" value="Neurotransmitter-gated ion-channel ligand-binding domain"/>
    <property type="match status" value="1"/>
</dbReference>
<dbReference type="Gene3D" id="1.20.58.390">
    <property type="entry name" value="Neurotransmitter-gated ion-channel transmembrane domain"/>
    <property type="match status" value="2"/>
</dbReference>
<dbReference type="InterPro" id="IPR006202">
    <property type="entry name" value="Neur_chan_lig-bd"/>
</dbReference>
<dbReference type="InterPro" id="IPR036734">
    <property type="entry name" value="Neur_chan_lig-bd_sf"/>
</dbReference>
<dbReference type="InterPro" id="IPR006201">
    <property type="entry name" value="Neur_channel"/>
</dbReference>
<dbReference type="InterPro" id="IPR036719">
    <property type="entry name" value="Neuro-gated_channel_TM_sf"/>
</dbReference>
<dbReference type="InterPro" id="IPR038050">
    <property type="entry name" value="Neuro_actylchol_rec"/>
</dbReference>
<dbReference type="InterPro" id="IPR006029">
    <property type="entry name" value="Neurotrans-gated_channel_TM"/>
</dbReference>
<dbReference type="InterPro" id="IPR018000">
    <property type="entry name" value="Neurotransmitter_ion_chnl_CS"/>
</dbReference>
<dbReference type="InterPro" id="IPR002394">
    <property type="entry name" value="Nicotinic_acetylcholine_rcpt"/>
</dbReference>
<dbReference type="NCBIfam" id="TIGR00860">
    <property type="entry name" value="LIC"/>
    <property type="match status" value="1"/>
</dbReference>
<dbReference type="PANTHER" id="PTHR18945">
    <property type="entry name" value="NEUROTRANSMITTER GATED ION CHANNEL"/>
    <property type="match status" value="1"/>
</dbReference>
<dbReference type="Pfam" id="PF02931">
    <property type="entry name" value="Neur_chan_LBD"/>
    <property type="match status" value="1"/>
</dbReference>
<dbReference type="Pfam" id="PF02932">
    <property type="entry name" value="Neur_chan_memb"/>
    <property type="match status" value="1"/>
</dbReference>
<dbReference type="PRINTS" id="PR00254">
    <property type="entry name" value="NICOTINICR"/>
</dbReference>
<dbReference type="PRINTS" id="PR00252">
    <property type="entry name" value="NRIONCHANNEL"/>
</dbReference>
<dbReference type="SUPFAM" id="SSF90112">
    <property type="entry name" value="Neurotransmitter-gated ion-channel transmembrane pore"/>
    <property type="match status" value="1"/>
</dbReference>
<dbReference type="SUPFAM" id="SSF63712">
    <property type="entry name" value="Nicotinic receptor ligand binding domain-like"/>
    <property type="match status" value="1"/>
</dbReference>
<dbReference type="PROSITE" id="PS00236">
    <property type="entry name" value="NEUROTR_ION_CHANNEL"/>
    <property type="match status" value="1"/>
</dbReference>